<comment type="function">
    <text evidence="1">Modulates transcription in response to changes in cellular NADH/NAD(+) redox state.</text>
</comment>
<comment type="subunit">
    <text evidence="1">Homodimer.</text>
</comment>
<comment type="subcellular location">
    <subcellularLocation>
        <location evidence="1">Cytoplasm</location>
    </subcellularLocation>
</comment>
<comment type="similarity">
    <text evidence="1">Belongs to the transcriptional regulatory Rex family.</text>
</comment>
<reference key="1">
    <citation type="submission" date="2003-10" db="EMBL/GenBank/DDBJ databases">
        <title>The complete genome sequence of the alkaliphilic Bacillus clausii KSM-K16.</title>
        <authorList>
            <person name="Takaki Y."/>
            <person name="Kageyama Y."/>
            <person name="Shimamura S."/>
            <person name="Suzuki H."/>
            <person name="Nishi S."/>
            <person name="Hatada Y."/>
            <person name="Kawai S."/>
            <person name="Ito S."/>
            <person name="Horikoshi K."/>
        </authorList>
    </citation>
    <scope>NUCLEOTIDE SEQUENCE [LARGE SCALE GENOMIC DNA]</scope>
    <source>
        <strain>KSM-K16</strain>
    </source>
</reference>
<keyword id="KW-0963">Cytoplasm</keyword>
<keyword id="KW-0238">DNA-binding</keyword>
<keyword id="KW-0520">NAD</keyword>
<keyword id="KW-1185">Reference proteome</keyword>
<keyword id="KW-0678">Repressor</keyword>
<keyword id="KW-0804">Transcription</keyword>
<keyword id="KW-0805">Transcription regulation</keyword>
<accession>Q5WJP3</accession>
<dbReference type="EMBL" id="AP006627">
    <property type="protein sequence ID" value="BAD63412.1"/>
    <property type="molecule type" value="Genomic_DNA"/>
</dbReference>
<dbReference type="RefSeq" id="WP_011245728.1">
    <property type="nucleotide sequence ID" value="NC_006582.1"/>
</dbReference>
<dbReference type="SMR" id="Q5WJP3"/>
<dbReference type="STRING" id="66692.ABC0873"/>
<dbReference type="KEGG" id="bcl:ABC0873"/>
<dbReference type="eggNOG" id="COG2344">
    <property type="taxonomic scope" value="Bacteria"/>
</dbReference>
<dbReference type="HOGENOM" id="CLU_061534_1_1_9"/>
<dbReference type="OrthoDB" id="9784760at2"/>
<dbReference type="Proteomes" id="UP000001168">
    <property type="component" value="Chromosome"/>
</dbReference>
<dbReference type="GO" id="GO:0005737">
    <property type="term" value="C:cytoplasm"/>
    <property type="evidence" value="ECO:0007669"/>
    <property type="project" value="UniProtKB-SubCell"/>
</dbReference>
<dbReference type="GO" id="GO:0003677">
    <property type="term" value="F:DNA binding"/>
    <property type="evidence" value="ECO:0007669"/>
    <property type="project" value="UniProtKB-UniRule"/>
</dbReference>
<dbReference type="GO" id="GO:0003700">
    <property type="term" value="F:DNA-binding transcription factor activity"/>
    <property type="evidence" value="ECO:0007669"/>
    <property type="project" value="UniProtKB-UniRule"/>
</dbReference>
<dbReference type="GO" id="GO:0045892">
    <property type="term" value="P:negative regulation of DNA-templated transcription"/>
    <property type="evidence" value="ECO:0007669"/>
    <property type="project" value="InterPro"/>
</dbReference>
<dbReference type="GO" id="GO:0051775">
    <property type="term" value="P:response to redox state"/>
    <property type="evidence" value="ECO:0007669"/>
    <property type="project" value="InterPro"/>
</dbReference>
<dbReference type="Gene3D" id="3.40.50.720">
    <property type="entry name" value="NAD(P)-binding Rossmann-like Domain"/>
    <property type="match status" value="1"/>
</dbReference>
<dbReference type="Gene3D" id="1.10.10.10">
    <property type="entry name" value="Winged helix-like DNA-binding domain superfamily/Winged helix DNA-binding domain"/>
    <property type="match status" value="1"/>
</dbReference>
<dbReference type="HAMAP" id="MF_01131">
    <property type="entry name" value="Rex"/>
    <property type="match status" value="1"/>
</dbReference>
<dbReference type="InterPro" id="IPR003781">
    <property type="entry name" value="CoA-bd"/>
</dbReference>
<dbReference type="InterPro" id="IPR036291">
    <property type="entry name" value="NAD(P)-bd_dom_sf"/>
</dbReference>
<dbReference type="InterPro" id="IPR009718">
    <property type="entry name" value="Rex_DNA-bd_C_dom"/>
</dbReference>
<dbReference type="InterPro" id="IPR022876">
    <property type="entry name" value="Tscrpt_rep_Rex"/>
</dbReference>
<dbReference type="InterPro" id="IPR036388">
    <property type="entry name" value="WH-like_DNA-bd_sf"/>
</dbReference>
<dbReference type="InterPro" id="IPR036390">
    <property type="entry name" value="WH_DNA-bd_sf"/>
</dbReference>
<dbReference type="NCBIfam" id="NF003989">
    <property type="entry name" value="PRK05472.1-3"/>
    <property type="match status" value="1"/>
</dbReference>
<dbReference type="NCBIfam" id="NF003991">
    <property type="entry name" value="PRK05472.1-5"/>
    <property type="match status" value="1"/>
</dbReference>
<dbReference type="NCBIfam" id="NF003994">
    <property type="entry name" value="PRK05472.2-3"/>
    <property type="match status" value="1"/>
</dbReference>
<dbReference type="NCBIfam" id="NF003995">
    <property type="entry name" value="PRK05472.2-4"/>
    <property type="match status" value="1"/>
</dbReference>
<dbReference type="NCBIfam" id="NF003996">
    <property type="entry name" value="PRK05472.2-5"/>
    <property type="match status" value="1"/>
</dbReference>
<dbReference type="PANTHER" id="PTHR35786">
    <property type="entry name" value="REDOX-SENSING TRANSCRIPTIONAL REPRESSOR REX"/>
    <property type="match status" value="1"/>
</dbReference>
<dbReference type="PANTHER" id="PTHR35786:SF1">
    <property type="entry name" value="REDOX-SENSING TRANSCRIPTIONAL REPRESSOR REX 1"/>
    <property type="match status" value="1"/>
</dbReference>
<dbReference type="Pfam" id="PF02629">
    <property type="entry name" value="CoA_binding"/>
    <property type="match status" value="1"/>
</dbReference>
<dbReference type="Pfam" id="PF06971">
    <property type="entry name" value="Put_DNA-bind_N"/>
    <property type="match status" value="1"/>
</dbReference>
<dbReference type="SMART" id="SM00881">
    <property type="entry name" value="CoA_binding"/>
    <property type="match status" value="1"/>
</dbReference>
<dbReference type="SUPFAM" id="SSF51735">
    <property type="entry name" value="NAD(P)-binding Rossmann-fold domains"/>
    <property type="match status" value="1"/>
</dbReference>
<dbReference type="SUPFAM" id="SSF46785">
    <property type="entry name" value="Winged helix' DNA-binding domain"/>
    <property type="match status" value="1"/>
</dbReference>
<organism>
    <name type="scientific">Shouchella clausii (strain KSM-K16)</name>
    <name type="common">Alkalihalobacillus clausii</name>
    <dbReference type="NCBI Taxonomy" id="66692"/>
    <lineage>
        <taxon>Bacteria</taxon>
        <taxon>Bacillati</taxon>
        <taxon>Bacillota</taxon>
        <taxon>Bacilli</taxon>
        <taxon>Bacillales</taxon>
        <taxon>Bacillaceae</taxon>
        <taxon>Shouchella</taxon>
    </lineage>
</organism>
<protein>
    <recommendedName>
        <fullName evidence="1">Redox-sensing transcriptional repressor Rex</fullName>
    </recommendedName>
</protein>
<sequence>MKSEQLKIPQATAKRLPLYYRFIESLHAAGKQRVSSTELSQAVKVDSATIRRDFSYFGALGKKGYGYNVQYLLSFFRETLDQDERTNVILVGVGNLGTALLQYNFSKNNNTVITHAFDVDEKKIGTKVGEVPVYNWDKLEEIGLQNVSIAVLTVPASQAQKSADRLVKAGIEGILNFTPVRLSVPAHIRVHHIDLAVELQALVYFLKHYPL</sequence>
<name>REX_SHOC1</name>
<gene>
    <name evidence="1" type="primary">rex</name>
    <name type="ordered locus">ABC0873</name>
</gene>
<evidence type="ECO:0000255" key="1">
    <source>
        <dbReference type="HAMAP-Rule" id="MF_01131"/>
    </source>
</evidence>
<feature type="chain" id="PRO_1000065391" description="Redox-sensing transcriptional repressor Rex">
    <location>
        <begin position="1"/>
        <end position="211"/>
    </location>
</feature>
<feature type="DNA-binding region" description="H-T-H motif" evidence="1">
    <location>
        <begin position="18"/>
        <end position="57"/>
    </location>
</feature>
<feature type="binding site" evidence="1">
    <location>
        <begin position="92"/>
        <end position="97"/>
    </location>
    <ligand>
        <name>NAD(+)</name>
        <dbReference type="ChEBI" id="CHEBI:57540"/>
    </ligand>
</feature>
<proteinExistence type="inferred from homology"/>